<sequence length="141" mass="15501">VLSDNDKTNVKATWSKVGDHASDYVAEALERMFFSFPTTKTYFPHFDLGHGSGQVKAHGKKVGEALTQAVGHLDDLPSALSALSDLHAHKLRVDPVNFKLLSHCLLVTLSSHQPTEFTPEVHASLDKFLSNVSTVLTSKYR</sequence>
<name>HBA_LOXAF</name>
<comment type="function">
    <text>Involved in oxygen transport from the lung to the various peripheral tissues.</text>
</comment>
<comment type="function">
    <molecule>Hemopressin</molecule>
    <text evidence="2">Hemopressin acts as an antagonist peptide of the cannabinoid receptor CNR1. Hemopressin-binding efficiently blocks cannabinoid receptor CNR1 and subsequent signaling.</text>
</comment>
<comment type="subunit">
    <text>Heterotetramer of two alpha chains and two beta chains.</text>
</comment>
<comment type="tissue specificity">
    <text>Red blood cells.</text>
</comment>
<comment type="similarity">
    <text evidence="4">Belongs to the globin family.</text>
</comment>
<protein>
    <recommendedName>
        <fullName>Hemoglobin subunit alpha</fullName>
    </recommendedName>
    <alternativeName>
        <fullName>Alpha-globin</fullName>
    </alternativeName>
    <alternativeName>
        <fullName>Hemoglobin alpha chain</fullName>
    </alternativeName>
    <component>
        <recommendedName>
            <fullName evidence="2">Hemopressin</fullName>
        </recommendedName>
    </component>
</protein>
<organism>
    <name type="scientific">Loxodonta africana</name>
    <name type="common">African elephant</name>
    <dbReference type="NCBI Taxonomy" id="9785"/>
    <lineage>
        <taxon>Eukaryota</taxon>
        <taxon>Metazoa</taxon>
        <taxon>Chordata</taxon>
        <taxon>Craniata</taxon>
        <taxon>Vertebrata</taxon>
        <taxon>Euteleostomi</taxon>
        <taxon>Mammalia</taxon>
        <taxon>Eutheria</taxon>
        <taxon>Afrotheria</taxon>
        <taxon>Proboscidea</taxon>
        <taxon>Elephantidae</taxon>
        <taxon>Loxodonta</taxon>
    </lineage>
</organism>
<reference key="1">
    <citation type="journal article" date="1984" name="Hoppe-Seyler's Z. Physiol. Chem.">
        <title>Phosphate-haemoglobin interaction. The primary structure of the haemoglobin of the African elephant (Loxodonta africana, Proboscidea): asparagine in position 2 of the beta-chain.</title>
        <authorList>
            <person name="Braunitzer G."/>
            <person name="Stangl A."/>
            <person name="Schrank B."/>
            <person name="Krombach C."/>
            <person name="Wiesner H."/>
        </authorList>
    </citation>
    <scope>PROTEIN SEQUENCE</scope>
</reference>
<dbReference type="PIR" id="A02278">
    <property type="entry name" value="HAELA"/>
</dbReference>
<dbReference type="SMR" id="P01955"/>
<dbReference type="FunCoup" id="P01955">
    <property type="interactions" value="9"/>
</dbReference>
<dbReference type="STRING" id="9785.ENSLAFP00000013265"/>
<dbReference type="eggNOG" id="KOG3378">
    <property type="taxonomic scope" value="Eukaryota"/>
</dbReference>
<dbReference type="HOGENOM" id="CLU_003827_10_2_1"/>
<dbReference type="InParanoid" id="P01955"/>
<dbReference type="OMA" id="MFTSFPT"/>
<dbReference type="Proteomes" id="UP000007646">
    <property type="component" value="Unassembled WGS sequence"/>
</dbReference>
<dbReference type="GO" id="GO:0072562">
    <property type="term" value="C:blood microparticle"/>
    <property type="evidence" value="ECO:0007669"/>
    <property type="project" value="TreeGrafter"/>
</dbReference>
<dbReference type="GO" id="GO:0031838">
    <property type="term" value="C:haptoglobin-hemoglobin complex"/>
    <property type="evidence" value="ECO:0007669"/>
    <property type="project" value="TreeGrafter"/>
</dbReference>
<dbReference type="GO" id="GO:0005833">
    <property type="term" value="C:hemoglobin complex"/>
    <property type="evidence" value="ECO:0007669"/>
    <property type="project" value="InterPro"/>
</dbReference>
<dbReference type="GO" id="GO:0031720">
    <property type="term" value="F:haptoglobin binding"/>
    <property type="evidence" value="ECO:0007669"/>
    <property type="project" value="TreeGrafter"/>
</dbReference>
<dbReference type="GO" id="GO:0020037">
    <property type="term" value="F:heme binding"/>
    <property type="evidence" value="ECO:0007669"/>
    <property type="project" value="InterPro"/>
</dbReference>
<dbReference type="GO" id="GO:0046872">
    <property type="term" value="F:metal ion binding"/>
    <property type="evidence" value="ECO:0007669"/>
    <property type="project" value="UniProtKB-KW"/>
</dbReference>
<dbReference type="GO" id="GO:0043177">
    <property type="term" value="F:organic acid binding"/>
    <property type="evidence" value="ECO:0007669"/>
    <property type="project" value="TreeGrafter"/>
</dbReference>
<dbReference type="GO" id="GO:0019825">
    <property type="term" value="F:oxygen binding"/>
    <property type="evidence" value="ECO:0007669"/>
    <property type="project" value="InterPro"/>
</dbReference>
<dbReference type="GO" id="GO:0005344">
    <property type="term" value="F:oxygen carrier activity"/>
    <property type="evidence" value="ECO:0007669"/>
    <property type="project" value="UniProtKB-KW"/>
</dbReference>
<dbReference type="GO" id="GO:0004601">
    <property type="term" value="F:peroxidase activity"/>
    <property type="evidence" value="ECO:0007669"/>
    <property type="project" value="TreeGrafter"/>
</dbReference>
<dbReference type="GO" id="GO:0042744">
    <property type="term" value="P:hydrogen peroxide catabolic process"/>
    <property type="evidence" value="ECO:0007669"/>
    <property type="project" value="TreeGrafter"/>
</dbReference>
<dbReference type="CDD" id="cd08927">
    <property type="entry name" value="Hb-alpha-like"/>
    <property type="match status" value="1"/>
</dbReference>
<dbReference type="FunFam" id="1.10.490.10:FF:000002">
    <property type="entry name" value="Hemoglobin subunit alpha"/>
    <property type="match status" value="1"/>
</dbReference>
<dbReference type="Gene3D" id="1.10.490.10">
    <property type="entry name" value="Globins"/>
    <property type="match status" value="1"/>
</dbReference>
<dbReference type="InterPro" id="IPR000971">
    <property type="entry name" value="Globin"/>
</dbReference>
<dbReference type="InterPro" id="IPR009050">
    <property type="entry name" value="Globin-like_sf"/>
</dbReference>
<dbReference type="InterPro" id="IPR012292">
    <property type="entry name" value="Globin/Proto"/>
</dbReference>
<dbReference type="InterPro" id="IPR002338">
    <property type="entry name" value="Hemoglobin_a-typ"/>
</dbReference>
<dbReference type="InterPro" id="IPR050056">
    <property type="entry name" value="Hemoglobin_oxygen_transport"/>
</dbReference>
<dbReference type="PANTHER" id="PTHR11442">
    <property type="entry name" value="HEMOGLOBIN FAMILY MEMBER"/>
    <property type="match status" value="1"/>
</dbReference>
<dbReference type="PANTHER" id="PTHR11442:SF48">
    <property type="entry name" value="HEMOGLOBIN SUBUNIT ALPHA"/>
    <property type="match status" value="1"/>
</dbReference>
<dbReference type="Pfam" id="PF00042">
    <property type="entry name" value="Globin"/>
    <property type="match status" value="1"/>
</dbReference>
<dbReference type="PRINTS" id="PR00612">
    <property type="entry name" value="ALPHAHAEM"/>
</dbReference>
<dbReference type="SUPFAM" id="SSF46458">
    <property type="entry name" value="Globin-like"/>
    <property type="match status" value="1"/>
</dbReference>
<dbReference type="PROSITE" id="PS01033">
    <property type="entry name" value="GLOBIN"/>
    <property type="match status" value="1"/>
</dbReference>
<accession>P01955</accession>
<keyword id="KW-0007">Acetylation</keyword>
<keyword id="KW-0903">Direct protein sequencing</keyword>
<keyword id="KW-0349">Heme</keyword>
<keyword id="KW-0408">Iron</keyword>
<keyword id="KW-0479">Metal-binding</keyword>
<keyword id="KW-0561">Oxygen transport</keyword>
<keyword id="KW-0597">Phosphoprotein</keyword>
<keyword id="KW-1185">Reference proteome</keyword>
<keyword id="KW-0813">Transport</keyword>
<gene>
    <name type="primary">HBA</name>
</gene>
<feature type="chain" id="PRO_0000052670" description="Hemoglobin subunit alpha">
    <location>
        <begin position="1"/>
        <end position="141"/>
    </location>
</feature>
<feature type="peptide" id="PRO_0000455891" description="Hemopressin" evidence="2">
    <location>
        <begin position="95"/>
        <end position="103"/>
    </location>
</feature>
<feature type="domain" description="Globin" evidence="4">
    <location>
        <begin position="1"/>
        <end position="141"/>
    </location>
</feature>
<feature type="binding site" evidence="4">
    <location>
        <position position="58"/>
    </location>
    <ligand>
        <name>O2</name>
        <dbReference type="ChEBI" id="CHEBI:15379"/>
    </ligand>
</feature>
<feature type="binding site" description="proximal binding residue" evidence="4">
    <location>
        <position position="87"/>
    </location>
    <ligand>
        <name>heme b</name>
        <dbReference type="ChEBI" id="CHEBI:60344"/>
    </ligand>
    <ligandPart>
        <name>Fe</name>
        <dbReference type="ChEBI" id="CHEBI:18248"/>
    </ligandPart>
</feature>
<feature type="modified residue" description="Phosphoserine" evidence="3">
    <location>
        <position position="3"/>
    </location>
</feature>
<feature type="modified residue" description="N6-succinyllysine" evidence="1">
    <location>
        <position position="7"/>
    </location>
</feature>
<feature type="modified residue" description="Phosphothreonine" evidence="3">
    <location>
        <position position="8"/>
    </location>
</feature>
<feature type="modified residue" description="N6-succinyllysine" evidence="1">
    <location>
        <position position="11"/>
    </location>
</feature>
<feature type="modified residue" description="N6-acetyllysine; alternate" evidence="3">
    <location>
        <position position="16"/>
    </location>
</feature>
<feature type="modified residue" description="N6-succinyllysine; alternate" evidence="1">
    <location>
        <position position="16"/>
    </location>
</feature>
<feature type="modified residue" description="Phosphotyrosine" evidence="3">
    <location>
        <position position="24"/>
    </location>
</feature>
<feature type="modified residue" description="Phosphoserine" evidence="3">
    <location>
        <position position="35"/>
    </location>
</feature>
<feature type="modified residue" description="N6-succinyllysine" evidence="1">
    <location>
        <position position="40"/>
    </location>
</feature>
<feature type="modified residue" description="Phosphoserine" evidence="1">
    <location>
        <position position="102"/>
    </location>
</feature>
<feature type="modified residue" description="Phosphothreonine" evidence="1">
    <location>
        <position position="108"/>
    </location>
</feature>
<feature type="modified residue" description="Phosphoserine" evidence="1">
    <location>
        <position position="124"/>
    </location>
</feature>
<feature type="modified residue" description="Phosphothreonine" evidence="1">
    <location>
        <position position="134"/>
    </location>
</feature>
<feature type="modified residue" description="Phosphothreonine" evidence="1">
    <location>
        <position position="137"/>
    </location>
</feature>
<feature type="modified residue" description="Phosphoserine" evidence="1">
    <location>
        <position position="138"/>
    </location>
</feature>
<evidence type="ECO:0000250" key="1">
    <source>
        <dbReference type="UniProtKB" id="P01942"/>
    </source>
</evidence>
<evidence type="ECO:0000250" key="2">
    <source>
        <dbReference type="UniProtKB" id="P01946"/>
    </source>
</evidence>
<evidence type="ECO:0000250" key="3">
    <source>
        <dbReference type="UniProtKB" id="P69905"/>
    </source>
</evidence>
<evidence type="ECO:0000255" key="4">
    <source>
        <dbReference type="PROSITE-ProRule" id="PRU00238"/>
    </source>
</evidence>
<proteinExistence type="evidence at protein level"/>